<dbReference type="EC" id="2.3.1.234" evidence="1"/>
<dbReference type="EMBL" id="CP001251">
    <property type="protein sequence ID" value="ACK42242.1"/>
    <property type="molecule type" value="Genomic_DNA"/>
</dbReference>
<dbReference type="RefSeq" id="WP_012583326.1">
    <property type="nucleotide sequence ID" value="NC_011661.1"/>
</dbReference>
<dbReference type="RefSeq" id="YP_002352856.1">
    <property type="nucleotide sequence ID" value="NC_011661.1"/>
</dbReference>
<dbReference type="SMR" id="B8E1B4"/>
<dbReference type="FunCoup" id="B8E1B4">
    <property type="interactions" value="429"/>
</dbReference>
<dbReference type="STRING" id="515635.Dtur_0962"/>
<dbReference type="EnsemblBacteria" id="ACK42242">
    <property type="protein sequence ID" value="ACK42242"/>
    <property type="gene ID" value="Dtur_0962"/>
</dbReference>
<dbReference type="KEGG" id="dtu:Dtur_0962"/>
<dbReference type="PATRIC" id="fig|515635.4.peg.999"/>
<dbReference type="eggNOG" id="COG0533">
    <property type="taxonomic scope" value="Bacteria"/>
</dbReference>
<dbReference type="HOGENOM" id="CLU_023208_0_2_0"/>
<dbReference type="InParanoid" id="B8E1B4"/>
<dbReference type="OrthoDB" id="9806197at2"/>
<dbReference type="Proteomes" id="UP000007719">
    <property type="component" value="Chromosome"/>
</dbReference>
<dbReference type="GO" id="GO:0005737">
    <property type="term" value="C:cytoplasm"/>
    <property type="evidence" value="ECO:0007669"/>
    <property type="project" value="UniProtKB-SubCell"/>
</dbReference>
<dbReference type="GO" id="GO:0005506">
    <property type="term" value="F:iron ion binding"/>
    <property type="evidence" value="ECO:0007669"/>
    <property type="project" value="UniProtKB-UniRule"/>
</dbReference>
<dbReference type="GO" id="GO:0061711">
    <property type="term" value="F:N(6)-L-threonylcarbamoyladenine synthase activity"/>
    <property type="evidence" value="ECO:0007669"/>
    <property type="project" value="UniProtKB-EC"/>
</dbReference>
<dbReference type="GO" id="GO:0002949">
    <property type="term" value="P:tRNA threonylcarbamoyladenosine modification"/>
    <property type="evidence" value="ECO:0007669"/>
    <property type="project" value="UniProtKB-UniRule"/>
</dbReference>
<dbReference type="CDD" id="cd24133">
    <property type="entry name" value="ASKHA_NBD_TsaD_bac"/>
    <property type="match status" value="1"/>
</dbReference>
<dbReference type="FunFam" id="3.30.420.40:FF:000012">
    <property type="entry name" value="tRNA N6-adenosine threonylcarbamoyltransferase"/>
    <property type="match status" value="1"/>
</dbReference>
<dbReference type="FunFam" id="3.30.420.40:FF:000040">
    <property type="entry name" value="tRNA N6-adenosine threonylcarbamoyltransferase"/>
    <property type="match status" value="1"/>
</dbReference>
<dbReference type="Gene3D" id="3.30.420.40">
    <property type="match status" value="2"/>
</dbReference>
<dbReference type="HAMAP" id="MF_01445">
    <property type="entry name" value="TsaD"/>
    <property type="match status" value="1"/>
</dbReference>
<dbReference type="InterPro" id="IPR043129">
    <property type="entry name" value="ATPase_NBD"/>
</dbReference>
<dbReference type="InterPro" id="IPR000905">
    <property type="entry name" value="Gcp-like_dom"/>
</dbReference>
<dbReference type="InterPro" id="IPR017861">
    <property type="entry name" value="KAE1/TsaD"/>
</dbReference>
<dbReference type="InterPro" id="IPR017860">
    <property type="entry name" value="Peptidase_M22_CS"/>
</dbReference>
<dbReference type="InterPro" id="IPR022450">
    <property type="entry name" value="TsaD"/>
</dbReference>
<dbReference type="NCBIfam" id="TIGR00329">
    <property type="entry name" value="gcp_kae1"/>
    <property type="match status" value="1"/>
</dbReference>
<dbReference type="NCBIfam" id="TIGR03723">
    <property type="entry name" value="T6A_TsaD_YgjD"/>
    <property type="match status" value="1"/>
</dbReference>
<dbReference type="PANTHER" id="PTHR11735">
    <property type="entry name" value="TRNA N6-ADENOSINE THREONYLCARBAMOYLTRANSFERASE"/>
    <property type="match status" value="1"/>
</dbReference>
<dbReference type="PANTHER" id="PTHR11735:SF6">
    <property type="entry name" value="TRNA N6-ADENOSINE THREONYLCARBAMOYLTRANSFERASE, MITOCHONDRIAL"/>
    <property type="match status" value="1"/>
</dbReference>
<dbReference type="Pfam" id="PF00814">
    <property type="entry name" value="TsaD"/>
    <property type="match status" value="1"/>
</dbReference>
<dbReference type="PRINTS" id="PR00789">
    <property type="entry name" value="OSIALOPTASE"/>
</dbReference>
<dbReference type="SUPFAM" id="SSF53067">
    <property type="entry name" value="Actin-like ATPase domain"/>
    <property type="match status" value="2"/>
</dbReference>
<dbReference type="PROSITE" id="PS01016">
    <property type="entry name" value="GLYCOPROTEASE"/>
    <property type="match status" value="1"/>
</dbReference>
<comment type="function">
    <text evidence="1">Required for the formation of a threonylcarbamoyl group on adenosine at position 37 (t(6)A37) in tRNAs that read codons beginning with adenine. Is involved in the transfer of the threonylcarbamoyl moiety of threonylcarbamoyl-AMP (TC-AMP) to the N6 group of A37, together with TsaE and TsaB. TsaD likely plays a direct catalytic role in this reaction.</text>
</comment>
<comment type="catalytic activity">
    <reaction evidence="1">
        <text>L-threonylcarbamoyladenylate + adenosine(37) in tRNA = N(6)-L-threonylcarbamoyladenosine(37) in tRNA + AMP + H(+)</text>
        <dbReference type="Rhea" id="RHEA:37059"/>
        <dbReference type="Rhea" id="RHEA-COMP:10162"/>
        <dbReference type="Rhea" id="RHEA-COMP:10163"/>
        <dbReference type="ChEBI" id="CHEBI:15378"/>
        <dbReference type="ChEBI" id="CHEBI:73682"/>
        <dbReference type="ChEBI" id="CHEBI:74411"/>
        <dbReference type="ChEBI" id="CHEBI:74418"/>
        <dbReference type="ChEBI" id="CHEBI:456215"/>
        <dbReference type="EC" id="2.3.1.234"/>
    </reaction>
</comment>
<comment type="cofactor">
    <cofactor evidence="1">
        <name>Fe(2+)</name>
        <dbReference type="ChEBI" id="CHEBI:29033"/>
    </cofactor>
    <text evidence="1">Binds 1 Fe(2+) ion per subunit.</text>
</comment>
<comment type="subcellular location">
    <subcellularLocation>
        <location evidence="1">Cytoplasm</location>
    </subcellularLocation>
</comment>
<comment type="similarity">
    <text evidence="1">Belongs to the KAE1 / TsaD family.</text>
</comment>
<reference key="1">
    <citation type="journal article" date="2016" name="Front. Microbiol.">
        <title>The complete genome sequence of hyperthermophile Dictyoglomus turgidum DSM 6724 reveals a specialized carbohydrate fermentor.</title>
        <authorList>
            <person name="Brumm P.J."/>
            <person name="Gowda K."/>
            <person name="Robb F.T."/>
            <person name="Mead D.A."/>
        </authorList>
    </citation>
    <scope>NUCLEOTIDE SEQUENCE [LARGE SCALE GENOMIC DNA]</scope>
    <source>
        <strain>DSM 6724 / Z-1310</strain>
    </source>
</reference>
<protein>
    <recommendedName>
        <fullName evidence="1">tRNA N6-adenosine threonylcarbamoyltransferase</fullName>
        <ecNumber evidence="1">2.3.1.234</ecNumber>
    </recommendedName>
    <alternativeName>
        <fullName evidence="1">N6-L-threonylcarbamoyladenine synthase</fullName>
        <shortName evidence="1">t(6)A synthase</shortName>
    </alternativeName>
    <alternativeName>
        <fullName evidence="1">t(6)A37 threonylcarbamoyladenosine biosynthesis protein TsaD</fullName>
    </alternativeName>
    <alternativeName>
        <fullName evidence="1">tRNA threonylcarbamoyladenosine biosynthesis protein TsaD</fullName>
    </alternativeName>
</protein>
<proteinExistence type="inferred from homology"/>
<sequence>MITIGIETSCDETSVSLLEDGNKILSNLVSSQVEIHKTFGGVVPEVASRIHVEVLNRLIELALEKAKKEFTDIDLIAVTQGPGLIGALWIGIMAAKTLSLALNKPLIGVNHLEGHIFANFLGEDPPTFPFIALIVSGGHTEYILVEDIGVYKILGQTLDDAAGEAFDKVARILGLNYPGGPEIDKISKMGKPIFNFPKIKCDRELDISFSGIKTAVLYLVRDLKKEGKEIPVADIAASFQERVVEELLERAFLALNKFNIKTLVVSGGVASNSYLQRRFKEESRKEGIKLYIPPPYLCTDNGAMIACAGYHLYQKGYKSDLYLSANPDLLLGER</sequence>
<gene>
    <name evidence="1" type="primary">tsaD</name>
    <name type="synonym">gcp</name>
    <name type="ordered locus">Dtur_0962</name>
</gene>
<keyword id="KW-0012">Acyltransferase</keyword>
<keyword id="KW-0963">Cytoplasm</keyword>
<keyword id="KW-0408">Iron</keyword>
<keyword id="KW-0479">Metal-binding</keyword>
<keyword id="KW-1185">Reference proteome</keyword>
<keyword id="KW-0808">Transferase</keyword>
<keyword id="KW-0819">tRNA processing</keyword>
<evidence type="ECO:0000255" key="1">
    <source>
        <dbReference type="HAMAP-Rule" id="MF_01445"/>
    </source>
</evidence>
<accession>B8E1B4</accession>
<name>TSAD_DICTD</name>
<feature type="chain" id="PRO_1000145973" description="tRNA N6-adenosine threonylcarbamoyltransferase">
    <location>
        <begin position="1"/>
        <end position="334"/>
    </location>
</feature>
<feature type="binding site" evidence="1">
    <location>
        <position position="111"/>
    </location>
    <ligand>
        <name>Fe cation</name>
        <dbReference type="ChEBI" id="CHEBI:24875"/>
    </ligand>
</feature>
<feature type="binding site" evidence="1">
    <location>
        <position position="115"/>
    </location>
    <ligand>
        <name>Fe cation</name>
        <dbReference type="ChEBI" id="CHEBI:24875"/>
    </ligand>
</feature>
<feature type="binding site" evidence="1">
    <location>
        <begin position="134"/>
        <end position="138"/>
    </location>
    <ligand>
        <name>substrate</name>
    </ligand>
</feature>
<feature type="binding site" evidence="1">
    <location>
        <position position="167"/>
    </location>
    <ligand>
        <name>substrate</name>
    </ligand>
</feature>
<feature type="binding site" evidence="1">
    <location>
        <position position="180"/>
    </location>
    <ligand>
        <name>substrate</name>
    </ligand>
</feature>
<feature type="binding site" evidence="1">
    <location>
        <position position="184"/>
    </location>
    <ligand>
        <name>substrate</name>
    </ligand>
</feature>
<feature type="binding site" evidence="1">
    <location>
        <position position="272"/>
    </location>
    <ligand>
        <name>substrate</name>
    </ligand>
</feature>
<feature type="binding site" evidence="1">
    <location>
        <position position="300"/>
    </location>
    <ligand>
        <name>Fe cation</name>
        <dbReference type="ChEBI" id="CHEBI:24875"/>
    </ligand>
</feature>
<organism>
    <name type="scientific">Dictyoglomus turgidum (strain DSM 6724 / Z-1310)</name>
    <dbReference type="NCBI Taxonomy" id="515635"/>
    <lineage>
        <taxon>Bacteria</taxon>
        <taxon>Pseudomonadati</taxon>
        <taxon>Dictyoglomota</taxon>
        <taxon>Dictyoglomia</taxon>
        <taxon>Dictyoglomales</taxon>
        <taxon>Dictyoglomaceae</taxon>
        <taxon>Dictyoglomus</taxon>
    </lineage>
</organism>